<feature type="chain" id="PRO_1000213063" description="NADPH-dependent 7-cyano-7-deazaguanine reductase">
    <location>
        <begin position="1"/>
        <end position="282"/>
    </location>
</feature>
<feature type="active site" description="Thioimide intermediate" evidence="1">
    <location>
        <position position="190"/>
    </location>
</feature>
<feature type="active site" description="Proton donor" evidence="1">
    <location>
        <position position="197"/>
    </location>
</feature>
<feature type="binding site" evidence="1">
    <location>
        <begin position="88"/>
        <end position="90"/>
    </location>
    <ligand>
        <name>substrate</name>
    </ligand>
</feature>
<feature type="binding site" evidence="1">
    <location>
        <begin position="90"/>
        <end position="91"/>
    </location>
    <ligand>
        <name>NADPH</name>
        <dbReference type="ChEBI" id="CHEBI:57783"/>
    </ligand>
</feature>
<feature type="binding site" evidence="1">
    <location>
        <begin position="229"/>
        <end position="230"/>
    </location>
    <ligand>
        <name>substrate</name>
    </ligand>
</feature>
<feature type="binding site" evidence="1">
    <location>
        <begin position="258"/>
        <end position="259"/>
    </location>
    <ligand>
        <name>NADPH</name>
        <dbReference type="ChEBI" id="CHEBI:57783"/>
    </ligand>
</feature>
<comment type="function">
    <text evidence="1">Catalyzes the NADPH-dependent reduction of 7-cyano-7-deazaguanine (preQ0) to 7-aminomethyl-7-deazaguanine (preQ1).</text>
</comment>
<comment type="catalytic activity">
    <reaction evidence="1">
        <text>7-aminomethyl-7-carbaguanine + 2 NADP(+) = 7-cyano-7-deazaguanine + 2 NADPH + 3 H(+)</text>
        <dbReference type="Rhea" id="RHEA:13409"/>
        <dbReference type="ChEBI" id="CHEBI:15378"/>
        <dbReference type="ChEBI" id="CHEBI:45075"/>
        <dbReference type="ChEBI" id="CHEBI:57783"/>
        <dbReference type="ChEBI" id="CHEBI:58349"/>
        <dbReference type="ChEBI" id="CHEBI:58703"/>
        <dbReference type="EC" id="1.7.1.13"/>
    </reaction>
</comment>
<comment type="pathway">
    <text evidence="1">tRNA modification; tRNA-queuosine biosynthesis.</text>
</comment>
<comment type="subunit">
    <text evidence="1">Homodimer.</text>
</comment>
<comment type="subcellular location">
    <subcellularLocation>
        <location evidence="1">Cytoplasm</location>
    </subcellularLocation>
</comment>
<comment type="similarity">
    <text evidence="1">Belongs to the GTP cyclohydrolase I family. QueF type 2 subfamily.</text>
</comment>
<organism>
    <name type="scientific">Escherichia coli (strain K12 / DH10B)</name>
    <dbReference type="NCBI Taxonomy" id="316385"/>
    <lineage>
        <taxon>Bacteria</taxon>
        <taxon>Pseudomonadati</taxon>
        <taxon>Pseudomonadota</taxon>
        <taxon>Gammaproteobacteria</taxon>
        <taxon>Enterobacterales</taxon>
        <taxon>Enterobacteriaceae</taxon>
        <taxon>Escherichia</taxon>
    </lineage>
</organism>
<reference key="1">
    <citation type="journal article" date="2008" name="J. Bacteriol.">
        <title>The complete genome sequence of Escherichia coli DH10B: insights into the biology of a laboratory workhorse.</title>
        <authorList>
            <person name="Durfee T."/>
            <person name="Nelson R."/>
            <person name="Baldwin S."/>
            <person name="Plunkett G. III"/>
            <person name="Burland V."/>
            <person name="Mau B."/>
            <person name="Petrosino J.F."/>
            <person name="Qin X."/>
            <person name="Muzny D.M."/>
            <person name="Ayele M."/>
            <person name="Gibbs R.A."/>
            <person name="Csorgo B."/>
            <person name="Posfai G."/>
            <person name="Weinstock G.M."/>
            <person name="Blattner F.R."/>
        </authorList>
    </citation>
    <scope>NUCLEOTIDE SEQUENCE [LARGE SCALE GENOMIC DNA]</scope>
    <source>
        <strain>K12 / DH10B</strain>
    </source>
</reference>
<keyword id="KW-0963">Cytoplasm</keyword>
<keyword id="KW-0521">NADP</keyword>
<keyword id="KW-0560">Oxidoreductase</keyword>
<keyword id="KW-0671">Queuosine biosynthesis</keyword>
<proteinExistence type="inferred from homology"/>
<protein>
    <recommendedName>
        <fullName evidence="1">NADPH-dependent 7-cyano-7-deazaguanine reductase</fullName>
        <ecNumber evidence="1">1.7.1.13</ecNumber>
    </recommendedName>
    <alternativeName>
        <fullName evidence="1">7-cyano-7-carbaguanine reductase</fullName>
    </alternativeName>
    <alternativeName>
        <fullName evidence="1">NADPH-dependent nitrile oxidoreductase</fullName>
    </alternativeName>
    <alternativeName>
        <fullName evidence="1">PreQ(0) reductase</fullName>
    </alternativeName>
</protein>
<gene>
    <name evidence="1" type="primary">queF</name>
    <name type="ordered locus">ECDH10B_2963</name>
</gene>
<sequence length="282" mass="32588">MSSYANHQALAGLTLGKSTDYRDTYDASLLQGVPRSLNRDPLGLKADNLPFHGTDIWTLYELSWLNAKGLPQVAVGHVELDYTSVNLIESKSFKLYLNSFNQTRFNNWDEVRQTLERDLSTCAQGKISVALYRLDELEGQPIGHFNGTCIDDQDITIDNYEFTTDYLENATCGEKVVEETLVSHLLKSNCLITHQPDWGSLQIQYRGRQIDREKLLRYLVSFRHHNEFHEQCVERIFNDLLRFCQPEKLSVYARYTRRGGLDINPWRSNSDFVPSTTRLVRQ</sequence>
<name>QUEF_ECODH</name>
<dbReference type="EC" id="1.7.1.13" evidence="1"/>
<dbReference type="EMBL" id="CP000948">
    <property type="protein sequence ID" value="ACB03907.1"/>
    <property type="molecule type" value="Genomic_DNA"/>
</dbReference>
<dbReference type="RefSeq" id="WP_000100421.1">
    <property type="nucleotide sequence ID" value="NC_010473.1"/>
</dbReference>
<dbReference type="SMR" id="B1XDK3"/>
<dbReference type="KEGG" id="ecd:ECDH10B_2963"/>
<dbReference type="HOGENOM" id="CLU_054738_0_0_6"/>
<dbReference type="UniPathway" id="UPA00392"/>
<dbReference type="GO" id="GO:0005737">
    <property type="term" value="C:cytoplasm"/>
    <property type="evidence" value="ECO:0007669"/>
    <property type="project" value="UniProtKB-SubCell"/>
</dbReference>
<dbReference type="GO" id="GO:0033739">
    <property type="term" value="F:preQ1 synthase activity"/>
    <property type="evidence" value="ECO:0007669"/>
    <property type="project" value="UniProtKB-UniRule"/>
</dbReference>
<dbReference type="GO" id="GO:0008616">
    <property type="term" value="P:queuosine biosynthetic process"/>
    <property type="evidence" value="ECO:0007669"/>
    <property type="project" value="UniProtKB-UniRule"/>
</dbReference>
<dbReference type="GO" id="GO:0006400">
    <property type="term" value="P:tRNA modification"/>
    <property type="evidence" value="ECO:0007669"/>
    <property type="project" value="UniProtKB-UniRule"/>
</dbReference>
<dbReference type="FunFam" id="3.30.1130.10:FF:000004">
    <property type="entry name" value="NADPH-dependent 7-cyano-7-deazaguanine reductase"/>
    <property type="match status" value="1"/>
</dbReference>
<dbReference type="FunFam" id="3.30.1130.10:FF:000006">
    <property type="entry name" value="NADPH-dependent 7-cyano-7-deazaguanine reductase"/>
    <property type="match status" value="1"/>
</dbReference>
<dbReference type="Gene3D" id="3.30.1130.10">
    <property type="match status" value="2"/>
</dbReference>
<dbReference type="HAMAP" id="MF_00817">
    <property type="entry name" value="QueF_type2"/>
    <property type="match status" value="1"/>
</dbReference>
<dbReference type="InterPro" id="IPR043133">
    <property type="entry name" value="GTP-CH-I_C/QueF"/>
</dbReference>
<dbReference type="InterPro" id="IPR050084">
    <property type="entry name" value="NADPH_dep_7-cyano-7-deazaG_red"/>
</dbReference>
<dbReference type="InterPro" id="IPR029500">
    <property type="entry name" value="QueF"/>
</dbReference>
<dbReference type="InterPro" id="IPR029139">
    <property type="entry name" value="QueF_N"/>
</dbReference>
<dbReference type="InterPro" id="IPR016428">
    <property type="entry name" value="QueF_type2"/>
</dbReference>
<dbReference type="NCBIfam" id="TIGR03138">
    <property type="entry name" value="QueF"/>
    <property type="match status" value="1"/>
</dbReference>
<dbReference type="PANTHER" id="PTHR34354">
    <property type="entry name" value="NADPH-DEPENDENT 7-CYANO-7-DEAZAGUANINE REDUCTASE"/>
    <property type="match status" value="1"/>
</dbReference>
<dbReference type="PANTHER" id="PTHR34354:SF1">
    <property type="entry name" value="NADPH-DEPENDENT 7-CYANO-7-DEAZAGUANINE REDUCTASE"/>
    <property type="match status" value="1"/>
</dbReference>
<dbReference type="Pfam" id="PF14489">
    <property type="entry name" value="QueF"/>
    <property type="match status" value="1"/>
</dbReference>
<dbReference type="Pfam" id="PF14819">
    <property type="entry name" value="QueF_N"/>
    <property type="match status" value="1"/>
</dbReference>
<dbReference type="PIRSF" id="PIRSF004750">
    <property type="entry name" value="Nitrile_oxidored_YqcD_prd"/>
    <property type="match status" value="1"/>
</dbReference>
<dbReference type="SUPFAM" id="SSF55620">
    <property type="entry name" value="Tetrahydrobiopterin biosynthesis enzymes-like"/>
    <property type="match status" value="1"/>
</dbReference>
<evidence type="ECO:0000255" key="1">
    <source>
        <dbReference type="HAMAP-Rule" id="MF_00817"/>
    </source>
</evidence>
<accession>B1XDK3</accession>